<keyword id="KW-0963">Cytoplasm</keyword>
<keyword id="KW-0378">Hydrolase</keyword>
<keyword id="KW-1185">Reference proteome</keyword>
<accession>P73796</accession>
<proteinExistence type="inferred from homology"/>
<organism>
    <name type="scientific">Synechocystis sp. (strain ATCC 27184 / PCC 6803 / Kazusa)</name>
    <dbReference type="NCBI Taxonomy" id="1111708"/>
    <lineage>
        <taxon>Bacteria</taxon>
        <taxon>Bacillati</taxon>
        <taxon>Cyanobacteriota</taxon>
        <taxon>Cyanophyceae</taxon>
        <taxon>Synechococcales</taxon>
        <taxon>Merismopediaceae</taxon>
        <taxon>Synechocystis</taxon>
    </lineage>
</organism>
<comment type="catalytic activity">
    <reaction evidence="1">
        <text>urea + 2 H2O + H(+) = hydrogencarbonate + 2 NH4(+)</text>
        <dbReference type="Rhea" id="RHEA:20557"/>
        <dbReference type="ChEBI" id="CHEBI:15377"/>
        <dbReference type="ChEBI" id="CHEBI:15378"/>
        <dbReference type="ChEBI" id="CHEBI:16199"/>
        <dbReference type="ChEBI" id="CHEBI:17544"/>
        <dbReference type="ChEBI" id="CHEBI:28938"/>
        <dbReference type="EC" id="3.5.1.5"/>
    </reaction>
</comment>
<comment type="pathway">
    <text evidence="1">Nitrogen metabolism; urea degradation; CO(2) and NH(3) from urea (urease route): step 1/1.</text>
</comment>
<comment type="subunit">
    <text evidence="1">Heterotrimer of UreA (gamma), UreB (beta) and UreC (alpha) subunits. Three heterotrimers associate to form the active enzyme.</text>
</comment>
<comment type="subcellular location">
    <subcellularLocation>
        <location evidence="1">Cytoplasm</location>
    </subcellularLocation>
</comment>
<comment type="similarity">
    <text evidence="1">Belongs to the urease gamma subunit family.</text>
</comment>
<protein>
    <recommendedName>
        <fullName evidence="1">Urease subunit gamma</fullName>
        <ecNumber evidence="1">3.5.1.5</ecNumber>
    </recommendedName>
    <alternativeName>
        <fullName evidence="1">Urea amidohydrolase subunit gamma</fullName>
    </alternativeName>
</protein>
<sequence length="100" mass="11056">MQLSPQEKDKLLIFTASLVAERRKARGLKLNYPEAVAYISAAILEGARDGRTVAELMNYGATLLSRDEVMEGVPEMLPEVQVEATFPDGTKLVTVHEPIR</sequence>
<dbReference type="EC" id="3.5.1.5" evidence="1"/>
<dbReference type="EMBL" id="BA000022">
    <property type="protein sequence ID" value="BAA17850.1"/>
    <property type="molecule type" value="Genomic_DNA"/>
</dbReference>
<dbReference type="PIR" id="S74889">
    <property type="entry name" value="S74889"/>
</dbReference>
<dbReference type="SMR" id="P73796"/>
<dbReference type="FunCoup" id="P73796">
    <property type="interactions" value="51"/>
</dbReference>
<dbReference type="IntAct" id="P73796">
    <property type="interactions" value="1"/>
</dbReference>
<dbReference type="STRING" id="1148.gene:10498718"/>
<dbReference type="PaxDb" id="1148-1652932"/>
<dbReference type="EnsemblBacteria" id="BAA17850">
    <property type="protein sequence ID" value="BAA17850"/>
    <property type="gene ID" value="BAA17850"/>
</dbReference>
<dbReference type="KEGG" id="syn:slr1256"/>
<dbReference type="eggNOG" id="COG0831">
    <property type="taxonomic scope" value="Bacteria"/>
</dbReference>
<dbReference type="InParanoid" id="P73796"/>
<dbReference type="PhylomeDB" id="P73796"/>
<dbReference type="UniPathway" id="UPA00258">
    <property type="reaction ID" value="UER00370"/>
</dbReference>
<dbReference type="Proteomes" id="UP000001425">
    <property type="component" value="Chromosome"/>
</dbReference>
<dbReference type="GO" id="GO:0005737">
    <property type="term" value="C:cytoplasm"/>
    <property type="evidence" value="ECO:0007669"/>
    <property type="project" value="UniProtKB-SubCell"/>
</dbReference>
<dbReference type="GO" id="GO:0016151">
    <property type="term" value="F:nickel cation binding"/>
    <property type="evidence" value="ECO:0007669"/>
    <property type="project" value="InterPro"/>
</dbReference>
<dbReference type="GO" id="GO:0009039">
    <property type="term" value="F:urease activity"/>
    <property type="evidence" value="ECO:0007669"/>
    <property type="project" value="UniProtKB-UniRule"/>
</dbReference>
<dbReference type="GO" id="GO:0043419">
    <property type="term" value="P:urea catabolic process"/>
    <property type="evidence" value="ECO:0007669"/>
    <property type="project" value="UniProtKB-UniRule"/>
</dbReference>
<dbReference type="CDD" id="cd00390">
    <property type="entry name" value="Urease_gamma"/>
    <property type="match status" value="1"/>
</dbReference>
<dbReference type="Gene3D" id="3.30.280.10">
    <property type="entry name" value="Urease, gamma-like subunit"/>
    <property type="match status" value="1"/>
</dbReference>
<dbReference type="HAMAP" id="MF_00739">
    <property type="entry name" value="Urease_gamma"/>
    <property type="match status" value="1"/>
</dbReference>
<dbReference type="InterPro" id="IPR012010">
    <property type="entry name" value="Urease_gamma"/>
</dbReference>
<dbReference type="InterPro" id="IPR002026">
    <property type="entry name" value="Urease_gamma/gamma-beta_su"/>
</dbReference>
<dbReference type="InterPro" id="IPR036463">
    <property type="entry name" value="Urease_gamma_sf"/>
</dbReference>
<dbReference type="InterPro" id="IPR050069">
    <property type="entry name" value="Urease_subunit"/>
</dbReference>
<dbReference type="NCBIfam" id="NF009712">
    <property type="entry name" value="PRK13241.1"/>
    <property type="match status" value="1"/>
</dbReference>
<dbReference type="NCBIfam" id="TIGR00193">
    <property type="entry name" value="urease_gam"/>
    <property type="match status" value="1"/>
</dbReference>
<dbReference type="PANTHER" id="PTHR33569">
    <property type="entry name" value="UREASE"/>
    <property type="match status" value="1"/>
</dbReference>
<dbReference type="PANTHER" id="PTHR33569:SF1">
    <property type="entry name" value="UREASE"/>
    <property type="match status" value="1"/>
</dbReference>
<dbReference type="Pfam" id="PF00547">
    <property type="entry name" value="Urease_gamma"/>
    <property type="match status" value="1"/>
</dbReference>
<dbReference type="PIRSF" id="PIRSF001223">
    <property type="entry name" value="Urease_gamma"/>
    <property type="match status" value="1"/>
</dbReference>
<dbReference type="SUPFAM" id="SSF54111">
    <property type="entry name" value="Urease, gamma-subunit"/>
    <property type="match status" value="1"/>
</dbReference>
<gene>
    <name evidence="1" type="primary">ureA</name>
    <name type="ordered locus">slr1256</name>
</gene>
<name>URE3_SYNY3</name>
<evidence type="ECO:0000255" key="1">
    <source>
        <dbReference type="HAMAP-Rule" id="MF_00739"/>
    </source>
</evidence>
<feature type="chain" id="PRO_0000098055" description="Urease subunit gamma">
    <location>
        <begin position="1"/>
        <end position="100"/>
    </location>
</feature>
<reference key="1">
    <citation type="journal article" date="1996" name="DNA Res.">
        <title>Sequence analysis of the genome of the unicellular cyanobacterium Synechocystis sp. strain PCC6803. II. Sequence determination of the entire genome and assignment of potential protein-coding regions.</title>
        <authorList>
            <person name="Kaneko T."/>
            <person name="Sato S."/>
            <person name="Kotani H."/>
            <person name="Tanaka A."/>
            <person name="Asamizu E."/>
            <person name="Nakamura Y."/>
            <person name="Miyajima N."/>
            <person name="Hirosawa M."/>
            <person name="Sugiura M."/>
            <person name="Sasamoto S."/>
            <person name="Kimura T."/>
            <person name="Hosouchi T."/>
            <person name="Matsuno A."/>
            <person name="Muraki A."/>
            <person name="Nakazaki N."/>
            <person name="Naruo K."/>
            <person name="Okumura S."/>
            <person name="Shimpo S."/>
            <person name="Takeuchi C."/>
            <person name="Wada T."/>
            <person name="Watanabe A."/>
            <person name="Yamada M."/>
            <person name="Yasuda M."/>
            <person name="Tabata S."/>
        </authorList>
    </citation>
    <scope>NUCLEOTIDE SEQUENCE [LARGE SCALE GENOMIC DNA]</scope>
    <source>
        <strain>ATCC 27184 / PCC 6803 / Kazusa</strain>
    </source>
</reference>